<proteinExistence type="inferred from homology"/>
<keyword id="KW-0150">Chloroplast</keyword>
<keyword id="KW-0378">Hydrolase</keyword>
<keyword id="KW-0934">Plastid</keyword>
<keyword id="KW-0645">Protease</keyword>
<keyword id="KW-0720">Serine protease</keyword>
<geneLocation type="chloroplast"/>
<gene>
    <name evidence="1" type="primary">clpP</name>
    <name type="ordered locus">PS150</name>
</gene>
<sequence length="216" mass="24743">MPIGVPKVPYRIPGDEEATWVDLYNVMYRERTLFLGQEIRCEITNHITGLMVYLSIEDGNSDIFLFINSPGGWLISGMAIFDTMQTVTPDIYTICLGIAASMASFILLGGEPTKRIAFPHARIMLHQPASAYYRARTPEFLLEVEELHKVREMITRVYALRTGKPFWVVSEDMERDVFMSADEAKAYGLVDIVGDEMIDEHCDTDPVWFPEMFKDW</sequence>
<protein>
    <recommendedName>
        <fullName evidence="1">ATP-dependent Clp protease proteolytic subunit</fullName>
        <ecNumber evidence="1">3.4.21.92</ecNumber>
    </recommendedName>
    <alternativeName>
        <fullName evidence="1">Endopeptidase Clp</fullName>
    </alternativeName>
</protein>
<evidence type="ECO:0000255" key="1">
    <source>
        <dbReference type="HAMAP-Rule" id="MF_00444"/>
    </source>
</evidence>
<reference key="1">
    <citation type="journal article" date="2004" name="Curr. Genet.">
        <title>Structural features and transcript-editing analysis of sugarcane (Saccharum officinarum L.) chloroplast genome.</title>
        <authorList>
            <person name="Calsa T. Jr."/>
            <person name="Carraro D.M."/>
            <person name="Benatti M.R."/>
            <person name="Barbosa A.C."/>
            <person name="Kitajima J.P."/>
            <person name="Carrer H."/>
        </authorList>
    </citation>
    <scope>NUCLEOTIDE SEQUENCE [LARGE SCALE GENOMIC DNA]</scope>
    <source>
        <strain>cv. SP-80-3280</strain>
    </source>
</reference>
<feature type="chain" id="PRO_0000179757" description="ATP-dependent Clp protease proteolytic subunit">
    <location>
        <begin position="1"/>
        <end position="216"/>
    </location>
</feature>
<feature type="active site" description="Nucleophile" evidence="1">
    <location>
        <position position="101"/>
    </location>
</feature>
<feature type="active site" evidence="1">
    <location>
        <position position="126"/>
    </location>
</feature>
<dbReference type="EC" id="3.4.21.92" evidence="1"/>
<dbReference type="EMBL" id="AE009947">
    <property type="protein sequence ID" value="AAT44716.1"/>
    <property type="molecule type" value="Genomic_DNA"/>
</dbReference>
<dbReference type="SMR" id="Q6L377"/>
<dbReference type="MEROPS" id="S14.002"/>
<dbReference type="GO" id="GO:0009570">
    <property type="term" value="C:chloroplast stroma"/>
    <property type="evidence" value="ECO:0007669"/>
    <property type="project" value="UniProtKB-SubCell"/>
</dbReference>
<dbReference type="GO" id="GO:0004176">
    <property type="term" value="F:ATP-dependent peptidase activity"/>
    <property type="evidence" value="ECO:0007669"/>
    <property type="project" value="InterPro"/>
</dbReference>
<dbReference type="GO" id="GO:0004252">
    <property type="term" value="F:serine-type endopeptidase activity"/>
    <property type="evidence" value="ECO:0007669"/>
    <property type="project" value="UniProtKB-UniRule"/>
</dbReference>
<dbReference type="GO" id="GO:0006508">
    <property type="term" value="P:proteolysis"/>
    <property type="evidence" value="ECO:0007669"/>
    <property type="project" value="UniProtKB-UniRule"/>
</dbReference>
<dbReference type="CDD" id="cd07017">
    <property type="entry name" value="S14_ClpP_2"/>
    <property type="match status" value="1"/>
</dbReference>
<dbReference type="FunFam" id="3.90.226.10:FF:000006">
    <property type="entry name" value="ATP-dependent Clp protease proteolytic subunit"/>
    <property type="match status" value="1"/>
</dbReference>
<dbReference type="Gene3D" id="3.90.226.10">
    <property type="entry name" value="2-enoyl-CoA Hydratase, Chain A, domain 1"/>
    <property type="match status" value="1"/>
</dbReference>
<dbReference type="HAMAP" id="MF_00444">
    <property type="entry name" value="ClpP"/>
    <property type="match status" value="1"/>
</dbReference>
<dbReference type="InterPro" id="IPR001907">
    <property type="entry name" value="ClpP"/>
</dbReference>
<dbReference type="InterPro" id="IPR029045">
    <property type="entry name" value="ClpP/crotonase-like_dom_sf"/>
</dbReference>
<dbReference type="InterPro" id="IPR023562">
    <property type="entry name" value="ClpP/TepA"/>
</dbReference>
<dbReference type="InterPro" id="IPR033135">
    <property type="entry name" value="ClpP_His_AS"/>
</dbReference>
<dbReference type="InterPro" id="IPR018215">
    <property type="entry name" value="ClpP_Ser_AS"/>
</dbReference>
<dbReference type="PANTHER" id="PTHR48481">
    <property type="entry name" value="ATP-DEPENDENT CLP PROTEASE PROTEOLYTIC SUBUNIT"/>
    <property type="match status" value="1"/>
</dbReference>
<dbReference type="PANTHER" id="PTHR48481:SF1">
    <property type="entry name" value="ATP-DEPENDENT CLP PROTEASE PROTEOLYTIC SUBUNIT"/>
    <property type="match status" value="1"/>
</dbReference>
<dbReference type="Pfam" id="PF00574">
    <property type="entry name" value="CLP_protease"/>
    <property type="match status" value="1"/>
</dbReference>
<dbReference type="PRINTS" id="PR00127">
    <property type="entry name" value="CLPPROTEASEP"/>
</dbReference>
<dbReference type="SUPFAM" id="SSF52096">
    <property type="entry name" value="ClpP/crotonase"/>
    <property type="match status" value="1"/>
</dbReference>
<dbReference type="PROSITE" id="PS00382">
    <property type="entry name" value="CLP_PROTEASE_HIS"/>
    <property type="match status" value="1"/>
</dbReference>
<dbReference type="PROSITE" id="PS00381">
    <property type="entry name" value="CLP_PROTEASE_SER"/>
    <property type="match status" value="1"/>
</dbReference>
<comment type="function">
    <text evidence="1">Cleaves peptides in various proteins in a process that requires ATP hydrolysis. Has a chymotrypsin-like activity. Plays a major role in the degradation of misfolded proteins.</text>
</comment>
<comment type="catalytic activity">
    <reaction evidence="1">
        <text>Hydrolysis of proteins to small peptides in the presence of ATP and magnesium. alpha-casein is the usual test substrate. In the absence of ATP, only oligopeptides shorter than five residues are hydrolyzed (such as succinyl-Leu-Tyr-|-NHMec, and Leu-Tyr-Leu-|-Tyr-Trp, in which cleavage of the -Tyr-|-Leu- and -Tyr-|-Trp bonds also occurs).</text>
        <dbReference type="EC" id="3.4.21.92"/>
    </reaction>
</comment>
<comment type="subunit">
    <text>Component of the chloroplastic Clp protease core complex.</text>
</comment>
<comment type="subcellular location">
    <subcellularLocation>
        <location evidence="1">Plastid</location>
        <location evidence="1">Chloroplast stroma</location>
    </subcellularLocation>
</comment>
<comment type="similarity">
    <text evidence="1">Belongs to the peptidase S14 family.</text>
</comment>
<accession>Q6L377</accession>
<name>CLPP_SACHY</name>
<organism>
    <name type="scientific">Saccharum hybrid</name>
    <name type="common">Sugarcane</name>
    <dbReference type="NCBI Taxonomy" id="15819"/>
    <lineage>
        <taxon>Eukaryota</taxon>
        <taxon>Viridiplantae</taxon>
        <taxon>Streptophyta</taxon>
        <taxon>Embryophyta</taxon>
        <taxon>Tracheophyta</taxon>
        <taxon>Spermatophyta</taxon>
        <taxon>Magnoliopsida</taxon>
        <taxon>Liliopsida</taxon>
        <taxon>Poales</taxon>
        <taxon>Poaceae</taxon>
        <taxon>PACMAD clade</taxon>
        <taxon>Panicoideae</taxon>
        <taxon>Andropogonodae</taxon>
        <taxon>Andropogoneae</taxon>
        <taxon>Saccharinae</taxon>
        <taxon>Saccharum</taxon>
    </lineage>
</organism>